<name>PEPT_STRA1</name>
<keyword id="KW-0031">Aminopeptidase</keyword>
<keyword id="KW-0963">Cytoplasm</keyword>
<keyword id="KW-0378">Hydrolase</keyword>
<keyword id="KW-0479">Metal-binding</keyword>
<keyword id="KW-0482">Metalloprotease</keyword>
<keyword id="KW-0645">Protease</keyword>
<keyword id="KW-0862">Zinc</keyword>
<dbReference type="EC" id="3.4.11.4" evidence="1"/>
<dbReference type="EMBL" id="CP000114">
    <property type="protein sequence ID" value="ABA44990.1"/>
    <property type="molecule type" value="Genomic_DNA"/>
</dbReference>
<dbReference type="RefSeq" id="WP_000119584.1">
    <property type="nucleotide sequence ID" value="NC_007432.1"/>
</dbReference>
<dbReference type="SMR" id="Q3K0C3"/>
<dbReference type="MEROPS" id="M20.003"/>
<dbReference type="KEGG" id="sak:SAK_1422"/>
<dbReference type="HOGENOM" id="CLU_053676_0_0_9"/>
<dbReference type="GO" id="GO:0005829">
    <property type="term" value="C:cytosol"/>
    <property type="evidence" value="ECO:0007669"/>
    <property type="project" value="TreeGrafter"/>
</dbReference>
<dbReference type="GO" id="GO:0008237">
    <property type="term" value="F:metallopeptidase activity"/>
    <property type="evidence" value="ECO:0007669"/>
    <property type="project" value="UniProtKB-KW"/>
</dbReference>
<dbReference type="GO" id="GO:0045148">
    <property type="term" value="F:tripeptide aminopeptidase activity"/>
    <property type="evidence" value="ECO:0007669"/>
    <property type="project" value="UniProtKB-UniRule"/>
</dbReference>
<dbReference type="GO" id="GO:0008270">
    <property type="term" value="F:zinc ion binding"/>
    <property type="evidence" value="ECO:0007669"/>
    <property type="project" value="UniProtKB-UniRule"/>
</dbReference>
<dbReference type="GO" id="GO:0043171">
    <property type="term" value="P:peptide catabolic process"/>
    <property type="evidence" value="ECO:0007669"/>
    <property type="project" value="UniProtKB-UniRule"/>
</dbReference>
<dbReference type="GO" id="GO:0006508">
    <property type="term" value="P:proteolysis"/>
    <property type="evidence" value="ECO:0007669"/>
    <property type="project" value="UniProtKB-UniRule"/>
</dbReference>
<dbReference type="CDD" id="cd03892">
    <property type="entry name" value="M20_peptT"/>
    <property type="match status" value="1"/>
</dbReference>
<dbReference type="FunFam" id="3.30.70.360:FF:000002">
    <property type="entry name" value="Peptidase T"/>
    <property type="match status" value="1"/>
</dbReference>
<dbReference type="Gene3D" id="3.30.70.360">
    <property type="match status" value="1"/>
</dbReference>
<dbReference type="Gene3D" id="3.40.630.10">
    <property type="entry name" value="Zn peptidases"/>
    <property type="match status" value="1"/>
</dbReference>
<dbReference type="HAMAP" id="MF_00550">
    <property type="entry name" value="Aminopeptidase_M20"/>
    <property type="match status" value="1"/>
</dbReference>
<dbReference type="InterPro" id="IPR001261">
    <property type="entry name" value="ArgE/DapE_CS"/>
</dbReference>
<dbReference type="InterPro" id="IPR036264">
    <property type="entry name" value="Bact_exopeptidase_dim_dom"/>
</dbReference>
<dbReference type="InterPro" id="IPR002933">
    <property type="entry name" value="Peptidase_M20"/>
</dbReference>
<dbReference type="InterPro" id="IPR011650">
    <property type="entry name" value="Peptidase_M20_dimer"/>
</dbReference>
<dbReference type="InterPro" id="IPR010161">
    <property type="entry name" value="Peptidase_M20B"/>
</dbReference>
<dbReference type="NCBIfam" id="TIGR01882">
    <property type="entry name" value="peptidase-T"/>
    <property type="match status" value="1"/>
</dbReference>
<dbReference type="NCBIfam" id="NF003976">
    <property type="entry name" value="PRK05469.1"/>
    <property type="match status" value="1"/>
</dbReference>
<dbReference type="NCBIfam" id="NF009920">
    <property type="entry name" value="PRK13381.1"/>
    <property type="match status" value="1"/>
</dbReference>
<dbReference type="PANTHER" id="PTHR42994">
    <property type="entry name" value="PEPTIDASE T"/>
    <property type="match status" value="1"/>
</dbReference>
<dbReference type="PANTHER" id="PTHR42994:SF1">
    <property type="entry name" value="PEPTIDASE T"/>
    <property type="match status" value="1"/>
</dbReference>
<dbReference type="Pfam" id="PF07687">
    <property type="entry name" value="M20_dimer"/>
    <property type="match status" value="1"/>
</dbReference>
<dbReference type="Pfam" id="PF01546">
    <property type="entry name" value="Peptidase_M20"/>
    <property type="match status" value="1"/>
</dbReference>
<dbReference type="PIRSF" id="PIRSF037215">
    <property type="entry name" value="Peptidase_M20B"/>
    <property type="match status" value="1"/>
</dbReference>
<dbReference type="SUPFAM" id="SSF55031">
    <property type="entry name" value="Bacterial exopeptidase dimerisation domain"/>
    <property type="match status" value="1"/>
</dbReference>
<dbReference type="SUPFAM" id="SSF53187">
    <property type="entry name" value="Zn-dependent exopeptidases"/>
    <property type="match status" value="1"/>
</dbReference>
<dbReference type="PROSITE" id="PS00758">
    <property type="entry name" value="ARGE_DAPE_CPG2_1"/>
    <property type="match status" value="1"/>
</dbReference>
<dbReference type="PROSITE" id="PS00759">
    <property type="entry name" value="ARGE_DAPE_CPG2_2"/>
    <property type="match status" value="1"/>
</dbReference>
<protein>
    <recommendedName>
        <fullName evidence="1">Peptidase T</fullName>
        <ecNumber evidence="1">3.4.11.4</ecNumber>
    </recommendedName>
    <alternativeName>
        <fullName evidence="1">Aminotripeptidase</fullName>
        <shortName evidence="1">Tripeptidase</shortName>
    </alternativeName>
    <alternativeName>
        <fullName evidence="1">Tripeptide aminopeptidase</fullName>
    </alternativeName>
</protein>
<proteinExistence type="inferred from homology"/>
<organism>
    <name type="scientific">Streptococcus agalactiae serotype Ia (strain ATCC 27591 / A909 / CDC SS700)</name>
    <dbReference type="NCBI Taxonomy" id="205921"/>
    <lineage>
        <taxon>Bacteria</taxon>
        <taxon>Bacillati</taxon>
        <taxon>Bacillota</taxon>
        <taxon>Bacilli</taxon>
        <taxon>Lactobacillales</taxon>
        <taxon>Streptococcaceae</taxon>
        <taxon>Streptococcus</taxon>
    </lineage>
</organism>
<sequence>MSYEKLLERFLTYVKINTRSNPNSTQTPTTQSQVDFALTVLKPEMEAIGLKDVHYLPSNGYLVGTLPATSDRLRHKIGFISHMDTADFNAENITPQIVDYKGGDIELGDSGYILSPKDFPNLNNYHGQTLITTDGKTLLGADDKSGIAEIMTAMEYLASHPEIEHCEIRVGFGPDEEIGIGADKFDVKDFDVDFAYTVDGGPLGELQYETFSAAGLELTFEGRNVHPGTAKNQMINALQLAMDFHSQLPENERPEQTDDYQGFYHLYDLSGTVDQAKSSYIIRDFEEVDFLKRKQLAQDIADNMNEALQSERVKVKLYDQYYNMKKVIEKDMTPINIAKEVMEELDIKPIIEPIRGGTDGSKISFMGIPTPNLFAGGENMHGRFEFVSLQTMEKAVDVILGIVAKD</sequence>
<comment type="function">
    <text evidence="1">Cleaves the N-terminal amino acid of tripeptides.</text>
</comment>
<comment type="catalytic activity">
    <reaction evidence="1">
        <text>Release of the N-terminal residue from a tripeptide.</text>
        <dbReference type="EC" id="3.4.11.4"/>
    </reaction>
</comment>
<comment type="cofactor">
    <cofactor evidence="1">
        <name>Zn(2+)</name>
        <dbReference type="ChEBI" id="CHEBI:29105"/>
    </cofactor>
    <text evidence="1">Binds 2 Zn(2+) ions per subunit.</text>
</comment>
<comment type="subcellular location">
    <subcellularLocation>
        <location evidence="1">Cytoplasm</location>
    </subcellularLocation>
</comment>
<comment type="similarity">
    <text evidence="1">Belongs to the peptidase M20B family.</text>
</comment>
<accession>Q3K0C3</accession>
<reference key="1">
    <citation type="journal article" date="2005" name="Proc. Natl. Acad. Sci. U.S.A.">
        <title>Genome analysis of multiple pathogenic isolates of Streptococcus agalactiae: implications for the microbial 'pan-genome'.</title>
        <authorList>
            <person name="Tettelin H."/>
            <person name="Masignani V."/>
            <person name="Cieslewicz M.J."/>
            <person name="Donati C."/>
            <person name="Medini D."/>
            <person name="Ward N.L."/>
            <person name="Angiuoli S.V."/>
            <person name="Crabtree J."/>
            <person name="Jones A.L."/>
            <person name="Durkin A.S."/>
            <person name="DeBoy R.T."/>
            <person name="Davidsen T.M."/>
            <person name="Mora M."/>
            <person name="Scarselli M."/>
            <person name="Margarit y Ros I."/>
            <person name="Peterson J.D."/>
            <person name="Hauser C.R."/>
            <person name="Sundaram J.P."/>
            <person name="Nelson W.C."/>
            <person name="Madupu R."/>
            <person name="Brinkac L.M."/>
            <person name="Dodson R.J."/>
            <person name="Rosovitz M.J."/>
            <person name="Sullivan S.A."/>
            <person name="Daugherty S.C."/>
            <person name="Haft D.H."/>
            <person name="Selengut J."/>
            <person name="Gwinn M.L."/>
            <person name="Zhou L."/>
            <person name="Zafar N."/>
            <person name="Khouri H."/>
            <person name="Radune D."/>
            <person name="Dimitrov G."/>
            <person name="Watkins K."/>
            <person name="O'Connor K.J."/>
            <person name="Smith S."/>
            <person name="Utterback T.R."/>
            <person name="White O."/>
            <person name="Rubens C.E."/>
            <person name="Grandi G."/>
            <person name="Madoff L.C."/>
            <person name="Kasper D.L."/>
            <person name="Telford J.L."/>
            <person name="Wessels M.R."/>
            <person name="Rappuoli R."/>
            <person name="Fraser C.M."/>
        </authorList>
    </citation>
    <scope>NUCLEOTIDE SEQUENCE [LARGE SCALE GENOMIC DNA]</scope>
    <source>
        <strain>ATCC 27591 / A909 / CDC SS700</strain>
    </source>
</reference>
<feature type="chain" id="PRO_1000129051" description="Peptidase T">
    <location>
        <begin position="1"/>
        <end position="406"/>
    </location>
</feature>
<feature type="active site" evidence="1">
    <location>
        <position position="84"/>
    </location>
</feature>
<feature type="active site" description="Proton acceptor" evidence="1">
    <location>
        <position position="176"/>
    </location>
</feature>
<feature type="binding site" evidence="1">
    <location>
        <position position="82"/>
    </location>
    <ligand>
        <name>Zn(2+)</name>
        <dbReference type="ChEBI" id="CHEBI:29105"/>
        <label>1</label>
    </ligand>
</feature>
<feature type="binding site" evidence="1">
    <location>
        <position position="142"/>
    </location>
    <ligand>
        <name>Zn(2+)</name>
        <dbReference type="ChEBI" id="CHEBI:29105"/>
        <label>1</label>
    </ligand>
</feature>
<feature type="binding site" evidence="1">
    <location>
        <position position="142"/>
    </location>
    <ligand>
        <name>Zn(2+)</name>
        <dbReference type="ChEBI" id="CHEBI:29105"/>
        <label>2</label>
    </ligand>
</feature>
<feature type="binding site" evidence="1">
    <location>
        <position position="177"/>
    </location>
    <ligand>
        <name>Zn(2+)</name>
        <dbReference type="ChEBI" id="CHEBI:29105"/>
        <label>2</label>
    </ligand>
</feature>
<feature type="binding site" evidence="1">
    <location>
        <position position="199"/>
    </location>
    <ligand>
        <name>Zn(2+)</name>
        <dbReference type="ChEBI" id="CHEBI:29105"/>
        <label>1</label>
    </ligand>
</feature>
<feature type="binding site" evidence="1">
    <location>
        <position position="381"/>
    </location>
    <ligand>
        <name>Zn(2+)</name>
        <dbReference type="ChEBI" id="CHEBI:29105"/>
        <label>2</label>
    </ligand>
</feature>
<evidence type="ECO:0000255" key="1">
    <source>
        <dbReference type="HAMAP-Rule" id="MF_00550"/>
    </source>
</evidence>
<gene>
    <name evidence="1" type="primary">pepT</name>
    <name type="ordered locus">SAK_1422</name>
</gene>